<comment type="function">
    <text evidence="1">Involved in cell shape control.</text>
</comment>
<comment type="subcellular location">
    <subcellularLocation>
        <location evidence="1">Cytoplasm</location>
    </subcellularLocation>
</comment>
<comment type="disruption phenotype">
    <text evidence="2">Does not affect motility. No differences in growth rate or cell size.</text>
</comment>
<comment type="similarity">
    <text evidence="1 4">Belongs to the CetZ family.</text>
</comment>
<comment type="sequence caution" evidence="4">
    <conflict type="erroneous initiation">
        <sequence resource="EMBL-CDS" id="ELY34527"/>
    </conflict>
    <text>Truncated N-terminus.</text>
</comment>
<name>CETZ5_HALVD</name>
<sequence length="394" mass="41500">MKVLCFGMGQAGGNVLDALLRYEQRTNADYVVDAVAYNTASADLRGLDLVPEENRILFGADEVSGHGVGADNELAAELAERDSRQLLRGTDGAPTSTADAFLIFAGLGGGTGSGAAPVLAKHLNRIYEQPIYGVGILPAADEGALYSRNAARSLKALVDVTDHVFAFDNGAWAESGEDVAQAHDTMNEVLVRRLGILFASGEVAESGTVAESVVDSSEVINTLRGGGISTIGYAASELPESDGGGGFSIKGLLGGDSSSTDELDSINRITTQTRKAVLGQLTLPCDVDSASRGLVVVSGPPEWLNRKAVERSRTWVEEQTGSMEVRGGDYPLSESNHVGVLVLLGDVSRSDRVAEIRSTAVEAEQNRRERIASDAADREDGTEAVVDDRLDSLF</sequence>
<protein>
    <recommendedName>
        <fullName evidence="4">Tubulin-like protein CetZ5</fullName>
    </recommendedName>
    <alternativeName>
        <fullName evidence="3">Cell-structure-related euryarchaeota tubulin/FtsZ homolog 5</fullName>
    </alternativeName>
</protein>
<gene>
    <name evidence="3" type="primary">cetZ5</name>
    <name evidence="5" type="synonym">ftsZ7</name>
    <name evidence="5" type="ordered locus">HVO_2013</name>
    <name evidence="6" type="ORF">C498_05346</name>
</gene>
<evidence type="ECO:0000255" key="1">
    <source>
        <dbReference type="HAMAP-Rule" id="MF_01946"/>
    </source>
</evidence>
<evidence type="ECO:0000269" key="2">
    <source>
    </source>
</evidence>
<evidence type="ECO:0000303" key="3">
    <source>
    </source>
</evidence>
<evidence type="ECO:0000305" key="4"/>
<evidence type="ECO:0000312" key="5">
    <source>
        <dbReference type="EMBL" id="ADE03513.1"/>
    </source>
</evidence>
<evidence type="ECO:0000312" key="6">
    <source>
        <dbReference type="EMBL" id="ELY34527.1"/>
    </source>
</evidence>
<proteinExistence type="inferred from homology"/>
<organism>
    <name type="scientific">Haloferax volcanii (strain ATCC 29605 / DSM 3757 / JCM 8879 / NBRC 14742 / NCIMB 2012 / VKM B-1768 / DS2)</name>
    <name type="common">Halobacterium volcanii</name>
    <dbReference type="NCBI Taxonomy" id="309800"/>
    <lineage>
        <taxon>Archaea</taxon>
        <taxon>Methanobacteriati</taxon>
        <taxon>Methanobacteriota</taxon>
        <taxon>Stenosarchaea group</taxon>
        <taxon>Halobacteria</taxon>
        <taxon>Halobacteriales</taxon>
        <taxon>Haloferacaceae</taxon>
        <taxon>Haloferax</taxon>
    </lineage>
</organism>
<keyword id="KW-0133">Cell shape</keyword>
<keyword id="KW-0963">Cytoplasm</keyword>
<keyword id="KW-0342">GTP-binding</keyword>
<keyword id="KW-0547">Nucleotide-binding</keyword>
<keyword id="KW-1185">Reference proteome</keyword>
<reference key="1">
    <citation type="journal article" date="2010" name="PLoS ONE">
        <title>The complete genome sequence of Haloferax volcanii DS2, a model archaeon.</title>
        <authorList>
            <person name="Hartman A.L."/>
            <person name="Norais C."/>
            <person name="Badger J.H."/>
            <person name="Delmas S."/>
            <person name="Haldenby S."/>
            <person name="Madupu R."/>
            <person name="Robinson J."/>
            <person name="Khouri H."/>
            <person name="Ren Q."/>
            <person name="Lowe T.M."/>
            <person name="Maupin-Furlow J."/>
            <person name="Pohlschroder M."/>
            <person name="Daniels C."/>
            <person name="Pfeiffer F."/>
            <person name="Allers T."/>
            <person name="Eisen J.A."/>
        </authorList>
    </citation>
    <scope>NUCLEOTIDE SEQUENCE [LARGE SCALE GENOMIC DNA]</scope>
    <source>
        <strain>ATCC 29605 / DSM 3757 / JCM 8879 / NBRC 14742 / NCIMB 2012 / VKM B-1768 / DS2</strain>
    </source>
</reference>
<reference key="2">
    <citation type="journal article" date="2014" name="PLoS Genet.">
        <title>Phylogenetically driven sequencing of extremely halophilic archaea reveals strategies for static and dynamic osmo-response.</title>
        <authorList>
            <person name="Becker E.A."/>
            <person name="Seitzer P.M."/>
            <person name="Tritt A."/>
            <person name="Larsen D."/>
            <person name="Krusor M."/>
            <person name="Yao A.I."/>
            <person name="Wu D."/>
            <person name="Madern D."/>
            <person name="Eisen J.A."/>
            <person name="Darling A.E."/>
            <person name="Facciotti M.T."/>
        </authorList>
    </citation>
    <scope>NUCLEOTIDE SEQUENCE [LARGE SCALE GENOMIC DNA]</scope>
    <source>
        <strain>ATCC 29605 / DSM 3757 / JCM 8879 / NBRC 14742 / NCIMB 2012 / VKM B-1768 / DS2</strain>
    </source>
</reference>
<reference key="3">
    <citation type="journal article" date="2015" name="Nature">
        <title>CetZ tubulin-like proteins control archaeal cell shape.</title>
        <authorList>
            <person name="Duggin I.G."/>
            <person name="Aylett C.H."/>
            <person name="Walsh J.C."/>
            <person name="Michie K.A."/>
            <person name="Wang Q."/>
            <person name="Turnbull L."/>
            <person name="Dawson E.M."/>
            <person name="Harry E.J."/>
            <person name="Whitchurch C.B."/>
            <person name="Amos L.A."/>
            <person name="Loewe J."/>
        </authorList>
    </citation>
    <scope>DISRUPTION PHENOTYPE</scope>
</reference>
<dbReference type="EMBL" id="CP001956">
    <property type="protein sequence ID" value="ADE03513.1"/>
    <property type="molecule type" value="Genomic_DNA"/>
</dbReference>
<dbReference type="EMBL" id="AOHU01000038">
    <property type="protein sequence ID" value="ELY34527.1"/>
    <property type="status" value="ALT_INIT"/>
    <property type="molecule type" value="Genomic_DNA"/>
</dbReference>
<dbReference type="RefSeq" id="WP_013035415.1">
    <property type="nucleotide sequence ID" value="NC_013967.1"/>
</dbReference>
<dbReference type="SMR" id="D4GU26"/>
<dbReference type="STRING" id="309800.HVO_2013"/>
<dbReference type="PaxDb" id="309800-C498_05346"/>
<dbReference type="EnsemblBacteria" id="ADE03513">
    <property type="protein sequence ID" value="ADE03513"/>
    <property type="gene ID" value="HVO_2013"/>
</dbReference>
<dbReference type="GeneID" id="8924337"/>
<dbReference type="KEGG" id="hvo:HVO_2013"/>
<dbReference type="PATRIC" id="fig|309800.29.peg.1043"/>
<dbReference type="eggNOG" id="arCOG02202">
    <property type="taxonomic scope" value="Archaea"/>
</dbReference>
<dbReference type="HOGENOM" id="CLU_058152_0_0_2"/>
<dbReference type="Proteomes" id="UP000008243">
    <property type="component" value="Chromosome"/>
</dbReference>
<dbReference type="Proteomes" id="UP000011532">
    <property type="component" value="Unassembled WGS sequence"/>
</dbReference>
<dbReference type="GO" id="GO:0032153">
    <property type="term" value="C:cell division site"/>
    <property type="evidence" value="ECO:0007669"/>
    <property type="project" value="TreeGrafter"/>
</dbReference>
<dbReference type="GO" id="GO:0005737">
    <property type="term" value="C:cytoplasm"/>
    <property type="evidence" value="ECO:0007669"/>
    <property type="project" value="UniProtKB-SubCell"/>
</dbReference>
<dbReference type="GO" id="GO:0005874">
    <property type="term" value="C:microtubule"/>
    <property type="evidence" value="ECO:0007669"/>
    <property type="project" value="InterPro"/>
</dbReference>
<dbReference type="GO" id="GO:0005525">
    <property type="term" value="F:GTP binding"/>
    <property type="evidence" value="ECO:0007669"/>
    <property type="project" value="UniProtKB-UniRule"/>
</dbReference>
<dbReference type="GO" id="GO:0003924">
    <property type="term" value="F:GTPase activity"/>
    <property type="evidence" value="ECO:0007669"/>
    <property type="project" value="InterPro"/>
</dbReference>
<dbReference type="GO" id="GO:0051301">
    <property type="term" value="P:cell division"/>
    <property type="evidence" value="ECO:0007669"/>
    <property type="project" value="TreeGrafter"/>
</dbReference>
<dbReference type="GO" id="GO:0007017">
    <property type="term" value="P:microtubule-based process"/>
    <property type="evidence" value="ECO:0007669"/>
    <property type="project" value="InterPro"/>
</dbReference>
<dbReference type="GO" id="GO:0008360">
    <property type="term" value="P:regulation of cell shape"/>
    <property type="evidence" value="ECO:0007669"/>
    <property type="project" value="UniProtKB-UniRule"/>
</dbReference>
<dbReference type="CDD" id="cd02202">
    <property type="entry name" value="CetZ_tubulin-like"/>
    <property type="match status" value="1"/>
</dbReference>
<dbReference type="Gene3D" id="3.30.1330.20">
    <property type="entry name" value="Tubulin/FtsZ, C-terminal domain"/>
    <property type="match status" value="1"/>
</dbReference>
<dbReference type="Gene3D" id="3.40.50.1440">
    <property type="entry name" value="Tubulin/FtsZ, GTPase domain"/>
    <property type="match status" value="1"/>
</dbReference>
<dbReference type="HAMAP" id="MF_01946">
    <property type="entry name" value="CetZ"/>
    <property type="match status" value="1"/>
</dbReference>
<dbReference type="InterPro" id="IPR032907">
    <property type="entry name" value="CetZ"/>
</dbReference>
<dbReference type="InterPro" id="IPR048737">
    <property type="entry name" value="CetZ_C"/>
</dbReference>
<dbReference type="InterPro" id="IPR045061">
    <property type="entry name" value="FtsZ/CetZ"/>
</dbReference>
<dbReference type="InterPro" id="IPR037103">
    <property type="entry name" value="Tubulin/FtsZ-like_C"/>
</dbReference>
<dbReference type="InterPro" id="IPR036525">
    <property type="entry name" value="Tubulin/FtsZ_GTPase_sf"/>
</dbReference>
<dbReference type="InterPro" id="IPR017975">
    <property type="entry name" value="Tubulin_CS"/>
</dbReference>
<dbReference type="InterPro" id="IPR003008">
    <property type="entry name" value="Tubulin_FtsZ_GTPase"/>
</dbReference>
<dbReference type="PANTHER" id="PTHR30314">
    <property type="entry name" value="CELL DIVISION PROTEIN FTSZ-RELATED"/>
    <property type="match status" value="1"/>
</dbReference>
<dbReference type="PANTHER" id="PTHR30314:SF10">
    <property type="entry name" value="TUBULIN-LIKE PROTEIN CETZ"/>
    <property type="match status" value="1"/>
</dbReference>
<dbReference type="Pfam" id="PF21011">
    <property type="entry name" value="CetZ_C"/>
    <property type="match status" value="1"/>
</dbReference>
<dbReference type="Pfam" id="PF00091">
    <property type="entry name" value="Tubulin"/>
    <property type="match status" value="1"/>
</dbReference>
<dbReference type="SMART" id="SM00864">
    <property type="entry name" value="Tubulin"/>
    <property type="match status" value="1"/>
</dbReference>
<dbReference type="SUPFAM" id="SSF52490">
    <property type="entry name" value="Tubulin nucleotide-binding domain-like"/>
    <property type="match status" value="1"/>
</dbReference>
<dbReference type="PROSITE" id="PS00227">
    <property type="entry name" value="TUBULIN"/>
    <property type="match status" value="1"/>
</dbReference>
<feature type="chain" id="PRO_0000432187" description="Tubulin-like protein CetZ5">
    <location>
        <begin position="1"/>
        <end position="394"/>
    </location>
</feature>
<feature type="binding site" evidence="1">
    <location>
        <begin position="10"/>
        <end position="14"/>
    </location>
    <ligand>
        <name>GTP</name>
        <dbReference type="ChEBI" id="CHEBI:37565"/>
    </ligand>
</feature>
<feature type="binding site" evidence="1">
    <location>
        <begin position="110"/>
        <end position="112"/>
    </location>
    <ligand>
        <name>GTP</name>
        <dbReference type="ChEBI" id="CHEBI:37565"/>
    </ligand>
</feature>
<feature type="binding site" evidence="1">
    <location>
        <position position="142"/>
    </location>
    <ligand>
        <name>GTP</name>
        <dbReference type="ChEBI" id="CHEBI:37565"/>
    </ligand>
</feature>
<feature type="binding site" evidence="1">
    <location>
        <position position="169"/>
    </location>
    <ligand>
        <name>GTP</name>
        <dbReference type="ChEBI" id="CHEBI:37565"/>
    </ligand>
</feature>
<feature type="binding site" evidence="1">
    <location>
        <position position="187"/>
    </location>
    <ligand>
        <name>GTP</name>
        <dbReference type="ChEBI" id="CHEBI:37565"/>
    </ligand>
</feature>
<accession>D4GU26</accession>
<accession>L9VC10</accession>